<feature type="chain" id="PRO_1000022553" description="Chorismate synthase">
    <location>
        <begin position="1"/>
        <end position="364"/>
    </location>
</feature>
<feature type="region of interest" description="Disordered" evidence="2">
    <location>
        <begin position="41"/>
        <end position="60"/>
    </location>
</feature>
<feature type="binding site" evidence="1">
    <location>
        <position position="48"/>
    </location>
    <ligand>
        <name>NADP(+)</name>
        <dbReference type="ChEBI" id="CHEBI:58349"/>
    </ligand>
</feature>
<feature type="binding site" evidence="1">
    <location>
        <position position="54"/>
    </location>
    <ligand>
        <name>NADP(+)</name>
        <dbReference type="ChEBI" id="CHEBI:58349"/>
    </ligand>
</feature>
<feature type="binding site" evidence="1">
    <location>
        <begin position="125"/>
        <end position="127"/>
    </location>
    <ligand>
        <name>FMN</name>
        <dbReference type="ChEBI" id="CHEBI:58210"/>
    </ligand>
</feature>
<feature type="binding site" evidence="1">
    <location>
        <begin position="238"/>
        <end position="239"/>
    </location>
    <ligand>
        <name>FMN</name>
        <dbReference type="ChEBI" id="CHEBI:58210"/>
    </ligand>
</feature>
<feature type="binding site" evidence="1">
    <location>
        <position position="278"/>
    </location>
    <ligand>
        <name>FMN</name>
        <dbReference type="ChEBI" id="CHEBI:58210"/>
    </ligand>
</feature>
<feature type="binding site" evidence="1">
    <location>
        <begin position="293"/>
        <end position="297"/>
    </location>
    <ligand>
        <name>FMN</name>
        <dbReference type="ChEBI" id="CHEBI:58210"/>
    </ligand>
</feature>
<feature type="binding site" evidence="1">
    <location>
        <position position="319"/>
    </location>
    <ligand>
        <name>FMN</name>
        <dbReference type="ChEBI" id="CHEBI:58210"/>
    </ligand>
</feature>
<protein>
    <recommendedName>
        <fullName evidence="1">Chorismate synthase</fullName>
        <shortName evidence="1">CS</shortName>
        <ecNumber evidence="1">4.2.3.5</ecNumber>
    </recommendedName>
    <alternativeName>
        <fullName evidence="1">5-enolpyruvylshikimate-3-phosphate phospholyase</fullName>
    </alternativeName>
</protein>
<proteinExistence type="inferred from homology"/>
<gene>
    <name evidence="1" type="primary">aroC</name>
    <name type="ordered locus">Shewmr7_1481</name>
</gene>
<dbReference type="EC" id="4.2.3.5" evidence="1"/>
<dbReference type="EMBL" id="CP000444">
    <property type="protein sequence ID" value="ABI42480.1"/>
    <property type="molecule type" value="Genomic_DNA"/>
</dbReference>
<dbReference type="SMR" id="Q0HWM5"/>
<dbReference type="KEGG" id="shm:Shewmr7_1481"/>
<dbReference type="HOGENOM" id="CLU_034547_0_2_6"/>
<dbReference type="UniPathway" id="UPA00053">
    <property type="reaction ID" value="UER00090"/>
</dbReference>
<dbReference type="GO" id="GO:0005829">
    <property type="term" value="C:cytosol"/>
    <property type="evidence" value="ECO:0007669"/>
    <property type="project" value="TreeGrafter"/>
</dbReference>
<dbReference type="GO" id="GO:0004107">
    <property type="term" value="F:chorismate synthase activity"/>
    <property type="evidence" value="ECO:0007669"/>
    <property type="project" value="UniProtKB-UniRule"/>
</dbReference>
<dbReference type="GO" id="GO:0010181">
    <property type="term" value="F:FMN binding"/>
    <property type="evidence" value="ECO:0007669"/>
    <property type="project" value="TreeGrafter"/>
</dbReference>
<dbReference type="GO" id="GO:0008652">
    <property type="term" value="P:amino acid biosynthetic process"/>
    <property type="evidence" value="ECO:0007669"/>
    <property type="project" value="UniProtKB-KW"/>
</dbReference>
<dbReference type="GO" id="GO:0009073">
    <property type="term" value="P:aromatic amino acid family biosynthetic process"/>
    <property type="evidence" value="ECO:0007669"/>
    <property type="project" value="UniProtKB-KW"/>
</dbReference>
<dbReference type="GO" id="GO:0009423">
    <property type="term" value="P:chorismate biosynthetic process"/>
    <property type="evidence" value="ECO:0007669"/>
    <property type="project" value="UniProtKB-UniRule"/>
</dbReference>
<dbReference type="CDD" id="cd07304">
    <property type="entry name" value="Chorismate_synthase"/>
    <property type="match status" value="1"/>
</dbReference>
<dbReference type="FunFam" id="3.60.150.10:FF:000001">
    <property type="entry name" value="Chorismate synthase"/>
    <property type="match status" value="1"/>
</dbReference>
<dbReference type="Gene3D" id="3.60.150.10">
    <property type="entry name" value="Chorismate synthase AroC"/>
    <property type="match status" value="1"/>
</dbReference>
<dbReference type="HAMAP" id="MF_00300">
    <property type="entry name" value="Chorismate_synth"/>
    <property type="match status" value="1"/>
</dbReference>
<dbReference type="InterPro" id="IPR000453">
    <property type="entry name" value="Chorismate_synth"/>
</dbReference>
<dbReference type="InterPro" id="IPR035904">
    <property type="entry name" value="Chorismate_synth_AroC_sf"/>
</dbReference>
<dbReference type="InterPro" id="IPR020541">
    <property type="entry name" value="Chorismate_synthase_CS"/>
</dbReference>
<dbReference type="NCBIfam" id="TIGR00033">
    <property type="entry name" value="aroC"/>
    <property type="match status" value="1"/>
</dbReference>
<dbReference type="NCBIfam" id="NF003793">
    <property type="entry name" value="PRK05382.1"/>
    <property type="match status" value="1"/>
</dbReference>
<dbReference type="PANTHER" id="PTHR21085">
    <property type="entry name" value="CHORISMATE SYNTHASE"/>
    <property type="match status" value="1"/>
</dbReference>
<dbReference type="PANTHER" id="PTHR21085:SF0">
    <property type="entry name" value="CHORISMATE SYNTHASE"/>
    <property type="match status" value="1"/>
</dbReference>
<dbReference type="Pfam" id="PF01264">
    <property type="entry name" value="Chorismate_synt"/>
    <property type="match status" value="1"/>
</dbReference>
<dbReference type="PIRSF" id="PIRSF001456">
    <property type="entry name" value="Chorismate_synth"/>
    <property type="match status" value="1"/>
</dbReference>
<dbReference type="SUPFAM" id="SSF103263">
    <property type="entry name" value="Chorismate synthase, AroC"/>
    <property type="match status" value="1"/>
</dbReference>
<dbReference type="PROSITE" id="PS00787">
    <property type="entry name" value="CHORISMATE_SYNTHASE_1"/>
    <property type="match status" value="1"/>
</dbReference>
<dbReference type="PROSITE" id="PS00788">
    <property type="entry name" value="CHORISMATE_SYNTHASE_2"/>
    <property type="match status" value="1"/>
</dbReference>
<dbReference type="PROSITE" id="PS00789">
    <property type="entry name" value="CHORISMATE_SYNTHASE_3"/>
    <property type="match status" value="1"/>
</dbReference>
<organism>
    <name type="scientific">Shewanella sp. (strain MR-7)</name>
    <dbReference type="NCBI Taxonomy" id="60481"/>
    <lineage>
        <taxon>Bacteria</taxon>
        <taxon>Pseudomonadati</taxon>
        <taxon>Pseudomonadota</taxon>
        <taxon>Gammaproteobacteria</taxon>
        <taxon>Alteromonadales</taxon>
        <taxon>Shewanellaceae</taxon>
        <taxon>Shewanella</taxon>
    </lineage>
</organism>
<reference key="1">
    <citation type="submission" date="2006-08" db="EMBL/GenBank/DDBJ databases">
        <title>Complete sequence of chromosome 1 of Shewanella sp. MR-7.</title>
        <authorList>
            <person name="Copeland A."/>
            <person name="Lucas S."/>
            <person name="Lapidus A."/>
            <person name="Barry K."/>
            <person name="Detter J.C."/>
            <person name="Glavina del Rio T."/>
            <person name="Hammon N."/>
            <person name="Israni S."/>
            <person name="Dalin E."/>
            <person name="Tice H."/>
            <person name="Pitluck S."/>
            <person name="Kiss H."/>
            <person name="Brettin T."/>
            <person name="Bruce D."/>
            <person name="Han C."/>
            <person name="Tapia R."/>
            <person name="Gilna P."/>
            <person name="Schmutz J."/>
            <person name="Larimer F."/>
            <person name="Land M."/>
            <person name="Hauser L."/>
            <person name="Kyrpides N."/>
            <person name="Mikhailova N."/>
            <person name="Nealson K."/>
            <person name="Konstantinidis K."/>
            <person name="Klappenbach J."/>
            <person name="Tiedje J."/>
            <person name="Richardson P."/>
        </authorList>
    </citation>
    <scope>NUCLEOTIDE SEQUENCE [LARGE SCALE GENOMIC DNA]</scope>
    <source>
        <strain>MR-7</strain>
    </source>
</reference>
<comment type="function">
    <text evidence="1">Catalyzes the anti-1,4-elimination of the C-3 phosphate and the C-6 proR hydrogen from 5-enolpyruvylshikimate-3-phosphate (EPSP) to yield chorismate, which is the branch point compound that serves as the starting substrate for the three terminal pathways of aromatic amino acid biosynthesis. This reaction introduces a second double bond into the aromatic ring system.</text>
</comment>
<comment type="catalytic activity">
    <reaction evidence="1">
        <text>5-O-(1-carboxyvinyl)-3-phosphoshikimate = chorismate + phosphate</text>
        <dbReference type="Rhea" id="RHEA:21020"/>
        <dbReference type="ChEBI" id="CHEBI:29748"/>
        <dbReference type="ChEBI" id="CHEBI:43474"/>
        <dbReference type="ChEBI" id="CHEBI:57701"/>
        <dbReference type="EC" id="4.2.3.5"/>
    </reaction>
</comment>
<comment type="cofactor">
    <cofactor evidence="1">
        <name>FMNH2</name>
        <dbReference type="ChEBI" id="CHEBI:57618"/>
    </cofactor>
    <text evidence="1">Reduced FMN (FMNH(2)).</text>
</comment>
<comment type="pathway">
    <text evidence="1">Metabolic intermediate biosynthesis; chorismate biosynthesis; chorismate from D-erythrose 4-phosphate and phosphoenolpyruvate: step 7/7.</text>
</comment>
<comment type="subunit">
    <text evidence="1">Homotetramer.</text>
</comment>
<comment type="similarity">
    <text evidence="1">Belongs to the chorismate synthase family.</text>
</comment>
<keyword id="KW-0028">Amino-acid biosynthesis</keyword>
<keyword id="KW-0057">Aromatic amino acid biosynthesis</keyword>
<keyword id="KW-0274">FAD</keyword>
<keyword id="KW-0285">Flavoprotein</keyword>
<keyword id="KW-0288">FMN</keyword>
<keyword id="KW-0456">Lyase</keyword>
<keyword id="KW-0521">NADP</keyword>
<evidence type="ECO:0000255" key="1">
    <source>
        <dbReference type="HAMAP-Rule" id="MF_00300"/>
    </source>
</evidence>
<evidence type="ECO:0000256" key="2">
    <source>
        <dbReference type="SAM" id="MobiDB-lite"/>
    </source>
</evidence>
<name>AROC_SHESR</name>
<sequence>MSGNSIGQNFVVTTFGESHGVALGCIIDGCPPGLELTEADMQHDLDRRRPGTSRYTTARREPDEVRILSGVFEGKTTGTSIGLLIENTDQRSQDYSNIKDLFRPGHADYTYQQKYGLRDYRGGGRSSARETAMRVAAGAVAKKYLKQVHGINIQGYMSQLGPISAETLDFSQIEQNAFFFPDASKLEALDEYMRELKKSGDSIGAKISVVATGVPVGLGEPVFDRLDADIAHALMGINAVKGVEIGDGFGVVTQKGSEGRDLMSPLGFESNHAGGILGGISSGQPIVAHIALKPTSSISVPGQSMTAQGEMAEVVTKGRHDPCVGIRAVPIAEAMLAIVLMDHLLRHRAQNQDVCSHTPILGMR</sequence>
<accession>Q0HWM5</accession>